<organism>
    <name type="scientific">Pseudomonas fluorescens (strain Pf0-1)</name>
    <dbReference type="NCBI Taxonomy" id="205922"/>
    <lineage>
        <taxon>Bacteria</taxon>
        <taxon>Pseudomonadati</taxon>
        <taxon>Pseudomonadota</taxon>
        <taxon>Gammaproteobacteria</taxon>
        <taxon>Pseudomonadales</taxon>
        <taxon>Pseudomonadaceae</taxon>
        <taxon>Pseudomonas</taxon>
    </lineage>
</organism>
<comment type="function">
    <text evidence="1">Methylates ribosomal protein L11.</text>
</comment>
<comment type="catalytic activity">
    <reaction evidence="1">
        <text>L-lysyl-[protein] + 3 S-adenosyl-L-methionine = N(6),N(6),N(6)-trimethyl-L-lysyl-[protein] + 3 S-adenosyl-L-homocysteine + 3 H(+)</text>
        <dbReference type="Rhea" id="RHEA:54192"/>
        <dbReference type="Rhea" id="RHEA-COMP:9752"/>
        <dbReference type="Rhea" id="RHEA-COMP:13826"/>
        <dbReference type="ChEBI" id="CHEBI:15378"/>
        <dbReference type="ChEBI" id="CHEBI:29969"/>
        <dbReference type="ChEBI" id="CHEBI:57856"/>
        <dbReference type="ChEBI" id="CHEBI:59789"/>
        <dbReference type="ChEBI" id="CHEBI:61961"/>
    </reaction>
</comment>
<comment type="subcellular location">
    <subcellularLocation>
        <location evidence="1">Cytoplasm</location>
    </subcellularLocation>
</comment>
<comment type="similarity">
    <text evidence="1">Belongs to the methyltransferase superfamily. PrmA family.</text>
</comment>
<name>PRMA_PSEPF</name>
<accession>Q3KIP5</accession>
<protein>
    <recommendedName>
        <fullName evidence="1">Ribosomal protein L11 methyltransferase</fullName>
        <shortName evidence="1">L11 Mtase</shortName>
        <ecNumber evidence="1">2.1.1.-</ecNumber>
    </recommendedName>
</protein>
<proteinExistence type="inferred from homology"/>
<evidence type="ECO:0000255" key="1">
    <source>
        <dbReference type="HAMAP-Rule" id="MF_00735"/>
    </source>
</evidence>
<dbReference type="EC" id="2.1.1.-" evidence="1"/>
<dbReference type="EMBL" id="CP000094">
    <property type="protein sequence ID" value="ABA72361.1"/>
    <property type="molecule type" value="Genomic_DNA"/>
</dbReference>
<dbReference type="RefSeq" id="WP_011332263.1">
    <property type="nucleotide sequence ID" value="NC_007492.2"/>
</dbReference>
<dbReference type="SMR" id="Q3KIP5"/>
<dbReference type="KEGG" id="pfo:Pfl01_0617"/>
<dbReference type="eggNOG" id="COG2264">
    <property type="taxonomic scope" value="Bacteria"/>
</dbReference>
<dbReference type="HOGENOM" id="CLU_049382_4_1_6"/>
<dbReference type="Proteomes" id="UP000002704">
    <property type="component" value="Chromosome"/>
</dbReference>
<dbReference type="GO" id="GO:0005829">
    <property type="term" value="C:cytosol"/>
    <property type="evidence" value="ECO:0007669"/>
    <property type="project" value="TreeGrafter"/>
</dbReference>
<dbReference type="GO" id="GO:0016279">
    <property type="term" value="F:protein-lysine N-methyltransferase activity"/>
    <property type="evidence" value="ECO:0007669"/>
    <property type="project" value="TreeGrafter"/>
</dbReference>
<dbReference type="GO" id="GO:0032259">
    <property type="term" value="P:methylation"/>
    <property type="evidence" value="ECO:0007669"/>
    <property type="project" value="UniProtKB-KW"/>
</dbReference>
<dbReference type="CDD" id="cd02440">
    <property type="entry name" value="AdoMet_MTases"/>
    <property type="match status" value="1"/>
</dbReference>
<dbReference type="Gene3D" id="3.40.50.150">
    <property type="entry name" value="Vaccinia Virus protein VP39"/>
    <property type="match status" value="1"/>
</dbReference>
<dbReference type="HAMAP" id="MF_00735">
    <property type="entry name" value="Methyltr_PrmA"/>
    <property type="match status" value="1"/>
</dbReference>
<dbReference type="InterPro" id="IPR050078">
    <property type="entry name" value="Ribosomal_L11_MeTrfase_PrmA"/>
</dbReference>
<dbReference type="InterPro" id="IPR004498">
    <property type="entry name" value="Ribosomal_PrmA_MeTrfase"/>
</dbReference>
<dbReference type="InterPro" id="IPR029063">
    <property type="entry name" value="SAM-dependent_MTases_sf"/>
</dbReference>
<dbReference type="NCBIfam" id="TIGR00406">
    <property type="entry name" value="prmA"/>
    <property type="match status" value="1"/>
</dbReference>
<dbReference type="PANTHER" id="PTHR43648">
    <property type="entry name" value="ELECTRON TRANSFER FLAVOPROTEIN BETA SUBUNIT LYSINE METHYLTRANSFERASE"/>
    <property type="match status" value="1"/>
</dbReference>
<dbReference type="PANTHER" id="PTHR43648:SF1">
    <property type="entry name" value="ELECTRON TRANSFER FLAVOPROTEIN BETA SUBUNIT LYSINE METHYLTRANSFERASE"/>
    <property type="match status" value="1"/>
</dbReference>
<dbReference type="Pfam" id="PF06325">
    <property type="entry name" value="PrmA"/>
    <property type="match status" value="1"/>
</dbReference>
<dbReference type="PIRSF" id="PIRSF000401">
    <property type="entry name" value="RPL11_MTase"/>
    <property type="match status" value="1"/>
</dbReference>
<dbReference type="SUPFAM" id="SSF53335">
    <property type="entry name" value="S-adenosyl-L-methionine-dependent methyltransferases"/>
    <property type="match status" value="1"/>
</dbReference>
<sequence>MPWLQVRLAISPEQAETYEDAFLEVGAVSVTFMDAEDQPIFEPELNTTPLWAHTHLLALFEGGTEAAPLLAHLELLTGSPLPEHHSEVIEDQDWERSWMDGFQPMRFGQRLWIVPSWHAAPEPDAVNLLLDPGLAFGTGTHPTTALCLEWLDGQDLKDCNVLDFGCGSGILAIAALLLGAKEAVGTDIDVQALEASRDNAGRNNIADELFPLYLPEELPQVKADVLVANILAGPLVSLAPQLSGLVKSGGRLALSGILAEQGDEVAAAYAQDFDLDPIANRDGWVRITGRRR</sequence>
<keyword id="KW-0963">Cytoplasm</keyword>
<keyword id="KW-0489">Methyltransferase</keyword>
<keyword id="KW-0949">S-adenosyl-L-methionine</keyword>
<keyword id="KW-0808">Transferase</keyword>
<feature type="chain" id="PRO_1000046071" description="Ribosomal protein L11 methyltransferase">
    <location>
        <begin position="1"/>
        <end position="292"/>
    </location>
</feature>
<feature type="binding site" evidence="1">
    <location>
        <position position="144"/>
    </location>
    <ligand>
        <name>S-adenosyl-L-methionine</name>
        <dbReference type="ChEBI" id="CHEBI:59789"/>
    </ligand>
</feature>
<feature type="binding site" evidence="1">
    <location>
        <position position="165"/>
    </location>
    <ligand>
        <name>S-adenosyl-L-methionine</name>
        <dbReference type="ChEBI" id="CHEBI:59789"/>
    </ligand>
</feature>
<feature type="binding site" evidence="1">
    <location>
        <position position="187"/>
    </location>
    <ligand>
        <name>S-adenosyl-L-methionine</name>
        <dbReference type="ChEBI" id="CHEBI:59789"/>
    </ligand>
</feature>
<feature type="binding site" evidence="1">
    <location>
        <position position="229"/>
    </location>
    <ligand>
        <name>S-adenosyl-L-methionine</name>
        <dbReference type="ChEBI" id="CHEBI:59789"/>
    </ligand>
</feature>
<reference key="1">
    <citation type="journal article" date="2009" name="Genome Biol.">
        <title>Genomic and genetic analyses of diversity and plant interactions of Pseudomonas fluorescens.</title>
        <authorList>
            <person name="Silby M.W."/>
            <person name="Cerdeno-Tarraga A.M."/>
            <person name="Vernikos G.S."/>
            <person name="Giddens S.R."/>
            <person name="Jackson R.W."/>
            <person name="Preston G.M."/>
            <person name="Zhang X.-X."/>
            <person name="Moon C.D."/>
            <person name="Gehrig S.M."/>
            <person name="Godfrey S.A.C."/>
            <person name="Knight C.G."/>
            <person name="Malone J.G."/>
            <person name="Robinson Z."/>
            <person name="Spiers A.J."/>
            <person name="Harris S."/>
            <person name="Challis G.L."/>
            <person name="Yaxley A.M."/>
            <person name="Harris D."/>
            <person name="Seeger K."/>
            <person name="Murphy L."/>
            <person name="Rutter S."/>
            <person name="Squares R."/>
            <person name="Quail M.A."/>
            <person name="Saunders E."/>
            <person name="Mavromatis K."/>
            <person name="Brettin T.S."/>
            <person name="Bentley S.D."/>
            <person name="Hothersall J."/>
            <person name="Stephens E."/>
            <person name="Thomas C.M."/>
            <person name="Parkhill J."/>
            <person name="Levy S.B."/>
            <person name="Rainey P.B."/>
            <person name="Thomson N.R."/>
        </authorList>
    </citation>
    <scope>NUCLEOTIDE SEQUENCE [LARGE SCALE GENOMIC DNA]</scope>
    <source>
        <strain>Pf0-1</strain>
    </source>
</reference>
<gene>
    <name evidence="1" type="primary">prmA</name>
    <name type="ordered locus">Pfl01_0617</name>
</gene>